<protein>
    <recommendedName>
        <fullName evidence="1">Small ribosomal subunit protein uS7</fullName>
    </recommendedName>
    <alternativeName>
        <fullName evidence="2">30S ribosomal protein S7</fullName>
    </alternativeName>
</protein>
<accession>P74229</accession>
<sequence>MSRRGNVKKRPVPPDPVYNSTLLSMTIRRVMRSGKKSLASSIVYNALASVGEKTGEDPLEVFEKAIKNLTPLVEVKARRVGGATYQVPMEVRPARGTALALRWLVHFSRARGGRTMESKLANEIMDAANETGAAIKKREETHRMAEANKAFAHYRY</sequence>
<proteinExistence type="inferred from homology"/>
<comment type="function">
    <text evidence="1">One of the primary rRNA binding proteins, it binds directly to 16S rRNA where it nucleates assembly of the head domain of the 30S subunit. Is located at the subunit interface close to the decoding center, probably blocks exit of the E-site tRNA.</text>
</comment>
<comment type="subunit">
    <text evidence="1">Part of the 30S ribosomal subunit. Contacts proteins S9 and S11.</text>
</comment>
<comment type="similarity">
    <text evidence="1">Belongs to the universal ribosomal protein uS7 family.</text>
</comment>
<organism>
    <name type="scientific">Synechocystis sp. (strain ATCC 27184 / PCC 6803 / Kazusa)</name>
    <dbReference type="NCBI Taxonomy" id="1111708"/>
    <lineage>
        <taxon>Bacteria</taxon>
        <taxon>Bacillati</taxon>
        <taxon>Cyanobacteriota</taxon>
        <taxon>Cyanophyceae</taxon>
        <taxon>Synechococcales</taxon>
        <taxon>Merismopediaceae</taxon>
        <taxon>Synechocystis</taxon>
    </lineage>
</organism>
<reference key="1">
    <citation type="journal article" date="1996" name="DNA Res.">
        <title>Sequence analysis of the genome of the unicellular cyanobacterium Synechocystis sp. strain PCC6803. II. Sequence determination of the entire genome and assignment of potential protein-coding regions.</title>
        <authorList>
            <person name="Kaneko T."/>
            <person name="Sato S."/>
            <person name="Kotani H."/>
            <person name="Tanaka A."/>
            <person name="Asamizu E."/>
            <person name="Nakamura Y."/>
            <person name="Miyajima N."/>
            <person name="Hirosawa M."/>
            <person name="Sugiura M."/>
            <person name="Sasamoto S."/>
            <person name="Kimura T."/>
            <person name="Hosouchi T."/>
            <person name="Matsuno A."/>
            <person name="Muraki A."/>
            <person name="Nakazaki N."/>
            <person name="Naruo K."/>
            <person name="Okumura S."/>
            <person name="Shimpo S."/>
            <person name="Takeuchi C."/>
            <person name="Wada T."/>
            <person name="Watanabe A."/>
            <person name="Yamada M."/>
            <person name="Yasuda M."/>
            <person name="Tabata S."/>
        </authorList>
    </citation>
    <scope>NUCLEOTIDE SEQUENCE [LARGE SCALE GENOMIC DNA]</scope>
    <source>
        <strain>ATCC 27184 / PCC 6803 / Kazusa</strain>
    </source>
</reference>
<feature type="chain" id="PRO_0000124366" description="Small ribosomal subunit protein uS7">
    <location>
        <begin position="1"/>
        <end position="156"/>
    </location>
</feature>
<gene>
    <name evidence="1" type="primary">rpsG</name>
    <name evidence="1" type="synonym">rps7</name>
    <name type="ordered locus">sll1097</name>
</gene>
<evidence type="ECO:0000255" key="1">
    <source>
        <dbReference type="HAMAP-Rule" id="MF_00480"/>
    </source>
</evidence>
<evidence type="ECO:0000305" key="2"/>
<dbReference type="EMBL" id="BA000022">
    <property type="protein sequence ID" value="BAA18323.1"/>
    <property type="molecule type" value="Genomic_DNA"/>
</dbReference>
<dbReference type="PIR" id="S75864">
    <property type="entry name" value="S75864"/>
</dbReference>
<dbReference type="SMR" id="P74229"/>
<dbReference type="FunCoup" id="P74229">
    <property type="interactions" value="478"/>
</dbReference>
<dbReference type="IntAct" id="P74229">
    <property type="interactions" value="1"/>
</dbReference>
<dbReference type="STRING" id="1148.gene:10499199"/>
<dbReference type="PaxDb" id="1148-1653409"/>
<dbReference type="EnsemblBacteria" id="BAA18323">
    <property type="protein sequence ID" value="BAA18323"/>
    <property type="gene ID" value="BAA18323"/>
</dbReference>
<dbReference type="KEGG" id="syn:sll1097"/>
<dbReference type="eggNOG" id="COG0049">
    <property type="taxonomic scope" value="Bacteria"/>
</dbReference>
<dbReference type="InParanoid" id="P74229"/>
<dbReference type="PhylomeDB" id="P74229"/>
<dbReference type="Proteomes" id="UP000001425">
    <property type="component" value="Chromosome"/>
</dbReference>
<dbReference type="GO" id="GO:0022627">
    <property type="term" value="C:cytosolic small ribosomal subunit"/>
    <property type="evidence" value="ECO:0000318"/>
    <property type="project" value="GO_Central"/>
</dbReference>
<dbReference type="GO" id="GO:0005840">
    <property type="term" value="C:ribosome"/>
    <property type="evidence" value="ECO:0000318"/>
    <property type="project" value="GO_Central"/>
</dbReference>
<dbReference type="GO" id="GO:0003729">
    <property type="term" value="F:mRNA binding"/>
    <property type="evidence" value="ECO:0000318"/>
    <property type="project" value="GO_Central"/>
</dbReference>
<dbReference type="GO" id="GO:0019843">
    <property type="term" value="F:rRNA binding"/>
    <property type="evidence" value="ECO:0000318"/>
    <property type="project" value="GO_Central"/>
</dbReference>
<dbReference type="GO" id="GO:0003735">
    <property type="term" value="F:structural constituent of ribosome"/>
    <property type="evidence" value="ECO:0000318"/>
    <property type="project" value="GO_Central"/>
</dbReference>
<dbReference type="GO" id="GO:0000049">
    <property type="term" value="F:tRNA binding"/>
    <property type="evidence" value="ECO:0007669"/>
    <property type="project" value="UniProtKB-UniRule"/>
</dbReference>
<dbReference type="GO" id="GO:0000028">
    <property type="term" value="P:ribosomal small subunit assembly"/>
    <property type="evidence" value="ECO:0000318"/>
    <property type="project" value="GO_Central"/>
</dbReference>
<dbReference type="GO" id="GO:0006412">
    <property type="term" value="P:translation"/>
    <property type="evidence" value="ECO:0000318"/>
    <property type="project" value="GO_Central"/>
</dbReference>
<dbReference type="CDD" id="cd14871">
    <property type="entry name" value="uS7_Chloroplast"/>
    <property type="match status" value="1"/>
</dbReference>
<dbReference type="FunFam" id="1.10.455.10:FF:000001">
    <property type="entry name" value="30S ribosomal protein S7"/>
    <property type="match status" value="1"/>
</dbReference>
<dbReference type="Gene3D" id="1.10.455.10">
    <property type="entry name" value="Ribosomal protein S7 domain"/>
    <property type="match status" value="1"/>
</dbReference>
<dbReference type="HAMAP" id="MF_00480_B">
    <property type="entry name" value="Ribosomal_uS7_B"/>
    <property type="match status" value="1"/>
</dbReference>
<dbReference type="InterPro" id="IPR000235">
    <property type="entry name" value="Ribosomal_uS7"/>
</dbReference>
<dbReference type="InterPro" id="IPR005717">
    <property type="entry name" value="Ribosomal_uS7_bac/org-type"/>
</dbReference>
<dbReference type="InterPro" id="IPR020606">
    <property type="entry name" value="Ribosomal_uS7_CS"/>
</dbReference>
<dbReference type="InterPro" id="IPR023798">
    <property type="entry name" value="Ribosomal_uS7_dom"/>
</dbReference>
<dbReference type="InterPro" id="IPR036823">
    <property type="entry name" value="Ribosomal_uS7_dom_sf"/>
</dbReference>
<dbReference type="NCBIfam" id="TIGR01029">
    <property type="entry name" value="rpsG_bact"/>
    <property type="match status" value="1"/>
</dbReference>
<dbReference type="PANTHER" id="PTHR11205">
    <property type="entry name" value="RIBOSOMAL PROTEIN S7"/>
    <property type="match status" value="1"/>
</dbReference>
<dbReference type="Pfam" id="PF00177">
    <property type="entry name" value="Ribosomal_S7"/>
    <property type="match status" value="1"/>
</dbReference>
<dbReference type="PIRSF" id="PIRSF002122">
    <property type="entry name" value="RPS7p_RPS7a_RPS5e_RPS7o"/>
    <property type="match status" value="1"/>
</dbReference>
<dbReference type="SUPFAM" id="SSF47973">
    <property type="entry name" value="Ribosomal protein S7"/>
    <property type="match status" value="1"/>
</dbReference>
<dbReference type="PROSITE" id="PS00052">
    <property type="entry name" value="RIBOSOMAL_S7"/>
    <property type="match status" value="1"/>
</dbReference>
<keyword id="KW-1185">Reference proteome</keyword>
<keyword id="KW-0687">Ribonucleoprotein</keyword>
<keyword id="KW-0689">Ribosomal protein</keyword>
<keyword id="KW-0694">RNA-binding</keyword>
<keyword id="KW-0699">rRNA-binding</keyword>
<keyword id="KW-0820">tRNA-binding</keyword>
<name>RS7_SYNY3</name>